<evidence type="ECO:0000250" key="1">
    <source>
        <dbReference type="UniProtKB" id="Q5VW38"/>
    </source>
</evidence>
<evidence type="ECO:0000255" key="2"/>
<evidence type="ECO:0000256" key="3">
    <source>
        <dbReference type="SAM" id="MobiDB-lite"/>
    </source>
</evidence>
<evidence type="ECO:0000269" key="4">
    <source>
    </source>
</evidence>
<evidence type="ECO:0000269" key="5">
    <source>
    </source>
</evidence>
<evidence type="ECO:0000305" key="6"/>
<evidence type="ECO:0000305" key="7">
    <source>
    </source>
</evidence>
<sequence length="551" mass="62002">MAVRVPLGCTGSFCPRLLPLLALLELLVDPSLGRVHHLALKDDVRHKVHLNTFGFFKDGYMVVNISSLSVNEPEGVKDKDTEIGFSLDRTKNDGFSSYLDEDVNYCILKKKSMSSVTLLILDISGSGVKVRSPPEAGKQLPEIVFSKDEKVPSRSQEPAVSSNPKDSKVQRTPDGSKAQRSTVDSKTIAEKFFSIHKNDGAVSFQFFFNISTSDQEGLYSLYFHKCPSSKLRSGEQVSFSLNIDITEKNPDSYLSAGEIPLPKLYVSMALLFFLSGTVWIHILRKRRNDVFKIHWLMAALPFTKSLSLVFHAIDYHYISSQGFPIEGWAVVYYITHLLKGALLFITIALIGTGWAFIKHILSDKDKKIFMIVIPLQVLANVAYIIIESTEEGTTEYGLWKDSLFLVDLLCCGAILFPVVWSIRHLQEASATDGKAAINLAKLKLFRHYYVLIVCYIYFTRIIAFLLKFAVPFQWKWLYQLLDETATLVFFVLTGYKFRPASDNPYLQLSQEEDDLEMESVVTTSGVMENMKKVKKVSNGAVEPQGSWEGTA</sequence>
<dbReference type="EMBL" id="AABR07051408">
    <property type="status" value="NOT_ANNOTATED_CDS"/>
    <property type="molecule type" value="Genomic_DNA"/>
</dbReference>
<dbReference type="EMBL" id="CH474001">
    <property type="protein sequence ID" value="EDL93279.1"/>
    <property type="molecule type" value="Genomic_DNA"/>
</dbReference>
<dbReference type="RefSeq" id="NP_001101298.1">
    <property type="nucleotide sequence ID" value="NM_001107828.1"/>
</dbReference>
<dbReference type="FunCoup" id="D3ZWZ9">
    <property type="interactions" value="4863"/>
</dbReference>
<dbReference type="STRING" id="10116.ENSRNOP00000037572"/>
<dbReference type="GlyCosmos" id="D3ZWZ9">
    <property type="glycosylation" value="2 sites, No reported glycans"/>
</dbReference>
<dbReference type="GlyGen" id="D3ZWZ9">
    <property type="glycosylation" value="2 sites"/>
</dbReference>
<dbReference type="iPTMnet" id="D3ZWZ9"/>
<dbReference type="PhosphoSitePlus" id="D3ZWZ9"/>
<dbReference type="PaxDb" id="10116-ENSRNOP00000037572"/>
<dbReference type="PeptideAtlas" id="D3ZWZ9"/>
<dbReference type="Ensembl" id="ENSRNOT00000037742.6">
    <property type="protein sequence ID" value="ENSRNOP00000037572.4"/>
    <property type="gene ID" value="ENSRNOG00000023589.6"/>
</dbReference>
<dbReference type="GeneID" id="311857"/>
<dbReference type="KEGG" id="rno:311857"/>
<dbReference type="UCSC" id="RGD:1305882">
    <property type="organism name" value="rat"/>
</dbReference>
<dbReference type="AGR" id="RGD:1305882"/>
<dbReference type="CTD" id="57720"/>
<dbReference type="RGD" id="1305882">
    <property type="gene designation" value="Gpr107"/>
</dbReference>
<dbReference type="eggNOG" id="KOG2569">
    <property type="taxonomic scope" value="Eukaryota"/>
</dbReference>
<dbReference type="GeneTree" id="ENSGT00940000160451"/>
<dbReference type="HOGENOM" id="CLU_020277_4_1_1"/>
<dbReference type="InParanoid" id="D3ZWZ9"/>
<dbReference type="OMA" id="GIHEEAW"/>
<dbReference type="OrthoDB" id="29657at2759"/>
<dbReference type="PhylomeDB" id="D3ZWZ9"/>
<dbReference type="TreeFam" id="TF314804"/>
<dbReference type="PRO" id="PR:D3ZWZ9"/>
<dbReference type="Proteomes" id="UP000002494">
    <property type="component" value="Chromosome 3"/>
</dbReference>
<dbReference type="Proteomes" id="UP000234681">
    <property type="component" value="Chromosome 3"/>
</dbReference>
<dbReference type="Bgee" id="ENSRNOG00000023589">
    <property type="expression patterns" value="Expressed in skeletal muscle tissue and 20 other cell types or tissues"/>
</dbReference>
<dbReference type="GO" id="GO:0030136">
    <property type="term" value="C:clathrin-coated vesicle"/>
    <property type="evidence" value="ECO:0000266"/>
    <property type="project" value="RGD"/>
</dbReference>
<dbReference type="GO" id="GO:0005769">
    <property type="term" value="C:early endosome"/>
    <property type="evidence" value="ECO:0000266"/>
    <property type="project" value="RGD"/>
</dbReference>
<dbReference type="GO" id="GO:0005794">
    <property type="term" value="C:Golgi apparatus"/>
    <property type="evidence" value="ECO:0000318"/>
    <property type="project" value="GO_Central"/>
</dbReference>
<dbReference type="GO" id="GO:0016020">
    <property type="term" value="C:membrane"/>
    <property type="evidence" value="ECO:0000318"/>
    <property type="project" value="GO_Central"/>
</dbReference>
<dbReference type="GO" id="GO:0005654">
    <property type="term" value="C:nucleoplasm"/>
    <property type="evidence" value="ECO:0007669"/>
    <property type="project" value="Ensembl"/>
</dbReference>
<dbReference type="GO" id="GO:0005886">
    <property type="term" value="C:plasma membrane"/>
    <property type="evidence" value="ECO:0007669"/>
    <property type="project" value="UniProtKB-SubCell"/>
</dbReference>
<dbReference type="GO" id="GO:0032050">
    <property type="term" value="F:clathrin heavy chain binding"/>
    <property type="evidence" value="ECO:0000266"/>
    <property type="project" value="RGD"/>
</dbReference>
<dbReference type="GO" id="GO:0072583">
    <property type="term" value="P:clathrin-dependent endocytosis"/>
    <property type="evidence" value="ECO:0000266"/>
    <property type="project" value="RGD"/>
</dbReference>
<dbReference type="InterPro" id="IPR053937">
    <property type="entry name" value="GOST_TM"/>
</dbReference>
<dbReference type="InterPro" id="IPR009637">
    <property type="entry name" value="GPR107/GPR108-like"/>
</dbReference>
<dbReference type="PANTHER" id="PTHR21229">
    <property type="entry name" value="LUNG SEVEN TRANSMEMBRANE RECEPTOR"/>
    <property type="match status" value="1"/>
</dbReference>
<dbReference type="PANTHER" id="PTHR21229:SF12">
    <property type="entry name" value="PROTEIN GPR107"/>
    <property type="match status" value="1"/>
</dbReference>
<dbReference type="Pfam" id="PF06814">
    <property type="entry name" value="GOST_TM"/>
    <property type="match status" value="1"/>
</dbReference>
<reference key="1">
    <citation type="journal article" date="2004" name="Nature">
        <title>Genome sequence of the Brown Norway rat yields insights into mammalian evolution.</title>
        <authorList>
            <person name="Gibbs R.A."/>
            <person name="Weinstock G.M."/>
            <person name="Metzker M.L."/>
            <person name="Muzny D.M."/>
            <person name="Sodergren E.J."/>
            <person name="Scherer S."/>
            <person name="Scott G."/>
            <person name="Steffen D."/>
            <person name="Worley K.C."/>
            <person name="Burch P.E."/>
            <person name="Okwuonu G."/>
            <person name="Hines S."/>
            <person name="Lewis L."/>
            <person name="Deramo C."/>
            <person name="Delgado O."/>
            <person name="Dugan-Rocha S."/>
            <person name="Miner G."/>
            <person name="Morgan M."/>
            <person name="Hawes A."/>
            <person name="Gill R."/>
            <person name="Holt R.A."/>
            <person name="Adams M.D."/>
            <person name="Amanatides P.G."/>
            <person name="Baden-Tillson H."/>
            <person name="Barnstead M."/>
            <person name="Chin S."/>
            <person name="Evans C.A."/>
            <person name="Ferriera S."/>
            <person name="Fosler C."/>
            <person name="Glodek A."/>
            <person name="Gu Z."/>
            <person name="Jennings D."/>
            <person name="Kraft C.L."/>
            <person name="Nguyen T."/>
            <person name="Pfannkoch C.M."/>
            <person name="Sitter C."/>
            <person name="Sutton G.G."/>
            <person name="Venter J.C."/>
            <person name="Woodage T."/>
            <person name="Smith D."/>
            <person name="Lee H.-M."/>
            <person name="Gustafson E."/>
            <person name="Cahill P."/>
            <person name="Kana A."/>
            <person name="Doucette-Stamm L."/>
            <person name="Weinstock K."/>
            <person name="Fechtel K."/>
            <person name="Weiss R.B."/>
            <person name="Dunn D.M."/>
            <person name="Green E.D."/>
            <person name="Blakesley R.W."/>
            <person name="Bouffard G.G."/>
            <person name="De Jong P.J."/>
            <person name="Osoegawa K."/>
            <person name="Zhu B."/>
            <person name="Marra M."/>
            <person name="Schein J."/>
            <person name="Bosdet I."/>
            <person name="Fjell C."/>
            <person name="Jones S."/>
            <person name="Krzywinski M."/>
            <person name="Mathewson C."/>
            <person name="Siddiqui A."/>
            <person name="Wye N."/>
            <person name="McPherson J."/>
            <person name="Zhao S."/>
            <person name="Fraser C.M."/>
            <person name="Shetty J."/>
            <person name="Shatsman S."/>
            <person name="Geer K."/>
            <person name="Chen Y."/>
            <person name="Abramzon S."/>
            <person name="Nierman W.C."/>
            <person name="Havlak P.H."/>
            <person name="Chen R."/>
            <person name="Durbin K.J."/>
            <person name="Egan A."/>
            <person name="Ren Y."/>
            <person name="Song X.-Z."/>
            <person name="Li B."/>
            <person name="Liu Y."/>
            <person name="Qin X."/>
            <person name="Cawley S."/>
            <person name="Cooney A.J."/>
            <person name="D'Souza L.M."/>
            <person name="Martin K."/>
            <person name="Wu J.Q."/>
            <person name="Gonzalez-Garay M.L."/>
            <person name="Jackson A.R."/>
            <person name="Kalafus K.J."/>
            <person name="McLeod M.P."/>
            <person name="Milosavljevic A."/>
            <person name="Virk D."/>
            <person name="Volkov A."/>
            <person name="Wheeler D.A."/>
            <person name="Zhang Z."/>
            <person name="Bailey J.A."/>
            <person name="Eichler E.E."/>
            <person name="Tuzun E."/>
            <person name="Birney E."/>
            <person name="Mongin E."/>
            <person name="Ureta-Vidal A."/>
            <person name="Woodwark C."/>
            <person name="Zdobnov E."/>
            <person name="Bork P."/>
            <person name="Suyama M."/>
            <person name="Torrents D."/>
            <person name="Alexandersson M."/>
            <person name="Trask B.J."/>
            <person name="Young J.M."/>
            <person name="Huang H."/>
            <person name="Wang H."/>
            <person name="Xing H."/>
            <person name="Daniels S."/>
            <person name="Gietzen D."/>
            <person name="Schmidt J."/>
            <person name="Stevens K."/>
            <person name="Vitt U."/>
            <person name="Wingrove J."/>
            <person name="Camara F."/>
            <person name="Mar Alba M."/>
            <person name="Abril J.F."/>
            <person name="Guigo R."/>
            <person name="Smit A."/>
            <person name="Dubchak I."/>
            <person name="Rubin E.M."/>
            <person name="Couronne O."/>
            <person name="Poliakov A."/>
            <person name="Huebner N."/>
            <person name="Ganten D."/>
            <person name="Goesele C."/>
            <person name="Hummel O."/>
            <person name="Kreitler T."/>
            <person name="Lee Y.-A."/>
            <person name="Monti J."/>
            <person name="Schulz H."/>
            <person name="Zimdahl H."/>
            <person name="Himmelbauer H."/>
            <person name="Lehrach H."/>
            <person name="Jacob H.J."/>
            <person name="Bromberg S."/>
            <person name="Gullings-Handley J."/>
            <person name="Jensen-Seaman M.I."/>
            <person name="Kwitek A.E."/>
            <person name="Lazar J."/>
            <person name="Pasko D."/>
            <person name="Tonellato P.J."/>
            <person name="Twigger S."/>
            <person name="Ponting C.P."/>
            <person name="Duarte J.M."/>
            <person name="Rice S."/>
            <person name="Goodstadt L."/>
            <person name="Beatson S.A."/>
            <person name="Emes R.D."/>
            <person name="Winter E.E."/>
            <person name="Webber C."/>
            <person name="Brandt P."/>
            <person name="Nyakatura G."/>
            <person name="Adetobi M."/>
            <person name="Chiaromonte F."/>
            <person name="Elnitski L."/>
            <person name="Eswara P."/>
            <person name="Hardison R.C."/>
            <person name="Hou M."/>
            <person name="Kolbe D."/>
            <person name="Makova K."/>
            <person name="Miller W."/>
            <person name="Nekrutenko A."/>
            <person name="Riemer C."/>
            <person name="Schwartz S."/>
            <person name="Taylor J."/>
            <person name="Yang S."/>
            <person name="Zhang Y."/>
            <person name="Lindpaintner K."/>
            <person name="Andrews T.D."/>
            <person name="Caccamo M."/>
            <person name="Clamp M."/>
            <person name="Clarke L."/>
            <person name="Curwen V."/>
            <person name="Durbin R.M."/>
            <person name="Eyras E."/>
            <person name="Searle S.M."/>
            <person name="Cooper G.M."/>
            <person name="Batzoglou S."/>
            <person name="Brudno M."/>
            <person name="Sidow A."/>
            <person name="Stone E.A."/>
            <person name="Payseur B.A."/>
            <person name="Bourque G."/>
            <person name="Lopez-Otin C."/>
            <person name="Puente X.S."/>
            <person name="Chakrabarti K."/>
            <person name="Chatterji S."/>
            <person name="Dewey C."/>
            <person name="Pachter L."/>
            <person name="Bray N."/>
            <person name="Yap V.B."/>
            <person name="Caspi A."/>
            <person name="Tesler G."/>
            <person name="Pevzner P.A."/>
            <person name="Haussler D."/>
            <person name="Roskin K.M."/>
            <person name="Baertsch R."/>
            <person name="Clawson H."/>
            <person name="Furey T.S."/>
            <person name="Hinrichs A.S."/>
            <person name="Karolchik D."/>
            <person name="Kent W.J."/>
            <person name="Rosenbloom K.R."/>
            <person name="Trumbower H."/>
            <person name="Weirauch M."/>
            <person name="Cooper D.N."/>
            <person name="Stenson P.D."/>
            <person name="Ma B."/>
            <person name="Brent M."/>
            <person name="Arumugam M."/>
            <person name="Shteynberg D."/>
            <person name="Copley R.R."/>
            <person name="Taylor M.S."/>
            <person name="Riethman H."/>
            <person name="Mudunuri U."/>
            <person name="Peterson J."/>
            <person name="Guyer M."/>
            <person name="Felsenfeld A."/>
            <person name="Old S."/>
            <person name="Mockrin S."/>
            <person name="Collins F.S."/>
        </authorList>
    </citation>
    <scope>NUCLEOTIDE SEQUENCE [LARGE SCALE GENOMIC DNA]</scope>
    <source>
        <strain>Brown Norway</strain>
    </source>
</reference>
<reference key="2">
    <citation type="submission" date="2005-09" db="EMBL/GenBank/DDBJ databases">
        <authorList>
            <person name="Mural R.J."/>
            <person name="Adams M.D."/>
            <person name="Myers E.W."/>
            <person name="Smith H.O."/>
            <person name="Venter J.C."/>
        </authorList>
    </citation>
    <scope>NUCLEOTIDE SEQUENCE [LARGE SCALE GENOMIC DNA]</scope>
    <source>
        <strain>Brown Norway</strain>
    </source>
</reference>
<reference key="3">
    <citation type="journal article" date="2012" name="Nat. Commun.">
        <title>Quantitative maps of protein phosphorylation sites across 14 different rat organs and tissues.</title>
        <authorList>
            <person name="Lundby A."/>
            <person name="Secher A."/>
            <person name="Lage K."/>
            <person name="Nordsborg N.B."/>
            <person name="Dmytriyev A."/>
            <person name="Lundby C."/>
            <person name="Olsen J.V."/>
        </authorList>
    </citation>
    <scope>IDENTIFICATION BY MASS SPECTROMETRY [LARGE SCALE ANALYSIS]</scope>
</reference>
<reference key="4">
    <citation type="journal article" date="2012" name="Am. J. Physiol.">
        <title>Evidence for an interaction of neuronostatin with the orphan G protein-coupled receptor, GPR107.</title>
        <authorList>
            <person name="Yosten G.L."/>
            <person name="Redlinger L.J."/>
            <person name="Samson W.K."/>
        </authorList>
    </citation>
    <scope>FUNCTION</scope>
    <scope>TISSUE SPECIFICITY</scope>
</reference>
<reference key="5">
    <citation type="journal article" date="2016" name="Am. J. Physiol.">
        <title>Neuronostatin acts via GPR107 to increase cAMP-independent PKA phosphorylation and proglucagon mRNA accumulation in pancreatic alpha-cells.</title>
        <authorList>
            <person name="Elrick M.M."/>
            <person name="Samson W.K."/>
            <person name="Corbett J.A."/>
            <person name="Salvatori A.S."/>
            <person name="Stein L.M."/>
            <person name="Kolar G.R."/>
            <person name="Naatz A."/>
            <person name="Yosten G.L."/>
        </authorList>
    </citation>
    <scope>FUNCTION</scope>
    <scope>SUBCELLULAR LOCATION</scope>
    <scope>TISSUE SPECIFICITY</scope>
</reference>
<feature type="signal peptide" evidence="2">
    <location>
        <begin position="1"/>
        <end position="33"/>
    </location>
</feature>
<feature type="chain" id="PRO_5014087767" description="Protein GPR107" evidence="2">
    <location>
        <begin position="34"/>
        <end position="551"/>
    </location>
</feature>
<feature type="topological domain" description="Extracellular" evidence="6">
    <location>
        <begin position="34"/>
        <end position="262"/>
    </location>
</feature>
<feature type="transmembrane region" description="Helical" evidence="2">
    <location>
        <begin position="263"/>
        <end position="283"/>
    </location>
</feature>
<feature type="topological domain" description="Cytoplasmic" evidence="6">
    <location>
        <begin position="284"/>
        <end position="292"/>
    </location>
</feature>
<feature type="transmembrane region" description="Helical" evidence="2">
    <location>
        <begin position="293"/>
        <end position="313"/>
    </location>
</feature>
<feature type="topological domain" description="Extracellular" evidence="6">
    <location>
        <begin position="314"/>
        <end position="336"/>
    </location>
</feature>
<feature type="transmembrane region" description="Helical" evidence="2">
    <location>
        <begin position="337"/>
        <end position="357"/>
    </location>
</feature>
<feature type="topological domain" description="Cytoplasmic" evidence="6">
    <location>
        <begin position="358"/>
        <end position="367"/>
    </location>
</feature>
<feature type="transmembrane region" description="Helical" evidence="2">
    <location>
        <begin position="368"/>
        <end position="388"/>
    </location>
</feature>
<feature type="topological domain" description="Extracellular" evidence="6">
    <location>
        <begin position="389"/>
        <end position="401"/>
    </location>
</feature>
<feature type="transmembrane region" description="Helical" evidence="2">
    <location>
        <begin position="402"/>
        <end position="422"/>
    </location>
</feature>
<feature type="topological domain" description="Cytoplasmic" evidence="6">
    <location>
        <begin position="423"/>
        <end position="443"/>
    </location>
</feature>
<feature type="transmembrane region" description="Helical" evidence="2">
    <location>
        <begin position="444"/>
        <end position="466"/>
    </location>
</feature>
<feature type="topological domain" description="Extracellular" evidence="6">
    <location>
        <begin position="467"/>
        <end position="475"/>
    </location>
</feature>
<feature type="transmembrane region" description="Helical" evidence="2">
    <location>
        <begin position="476"/>
        <end position="495"/>
    </location>
</feature>
<feature type="topological domain" description="Cytoplasmic" evidence="6">
    <location>
        <begin position="496"/>
        <end position="551"/>
    </location>
</feature>
<feature type="region of interest" description="Disordered" evidence="3">
    <location>
        <begin position="127"/>
        <end position="183"/>
    </location>
</feature>
<feature type="compositionally biased region" description="Polar residues" evidence="3">
    <location>
        <begin position="153"/>
        <end position="164"/>
    </location>
</feature>
<feature type="glycosylation site" description="N-linked (GlcNAc...) asparagine" evidence="2">
    <location>
        <position position="64"/>
    </location>
</feature>
<feature type="glycosylation site" description="N-linked (GlcNAc...) asparagine" evidence="2">
    <location>
        <position position="209"/>
    </location>
</feature>
<keyword id="KW-1003">Cell membrane</keyword>
<keyword id="KW-1015">Disulfide bond</keyword>
<keyword id="KW-0325">Glycoprotein</keyword>
<keyword id="KW-0333">Golgi apparatus</keyword>
<keyword id="KW-0472">Membrane</keyword>
<keyword id="KW-0675">Receptor</keyword>
<keyword id="KW-1185">Reference proteome</keyword>
<keyword id="KW-0732">Signal</keyword>
<keyword id="KW-0812">Transmembrane</keyword>
<keyword id="KW-1133">Transmembrane helix</keyword>
<comment type="function">
    <text evidence="4 5">Has been proposed to act as a receptor for neuronostatin, a peptide derived from the somatostatin/SST precursor (PubMed:22933024, PubMed:26561648). Involved in blood sugar regulation through the induction of glucagon in response to low glucose (PubMed:26561648).</text>
</comment>
<comment type="subcellular location">
    <subcellularLocation>
        <location evidence="7">Cell membrane</location>
        <topology evidence="6">Multi-pass membrane protein</topology>
    </subcellularLocation>
    <subcellularLocation>
        <location evidence="1">Golgi apparatus</location>
        <location evidence="1">trans-Golgi network membrane</location>
        <topology evidence="2">Multi-pass membrane protein</topology>
    </subcellularLocation>
</comment>
<comment type="tissue specificity">
    <text evidence="4 5">Widely expressed (PubMed:22933024, PubMed:26561648). Not detected in the duodenum, nor in the exocrine pancreas (PubMed:22933024).</text>
</comment>
<comment type="PTM">
    <text evidence="1">Cleaved by FURIN to yield two fragments that remain associated via a disulfide bond.</text>
</comment>
<comment type="similarity">
    <text evidence="6">Belongs to the LU7TM family.</text>
</comment>
<organism>
    <name type="scientific">Rattus norvegicus</name>
    <name type="common">Rat</name>
    <dbReference type="NCBI Taxonomy" id="10116"/>
    <lineage>
        <taxon>Eukaryota</taxon>
        <taxon>Metazoa</taxon>
        <taxon>Chordata</taxon>
        <taxon>Craniata</taxon>
        <taxon>Vertebrata</taxon>
        <taxon>Euteleostomi</taxon>
        <taxon>Mammalia</taxon>
        <taxon>Eutheria</taxon>
        <taxon>Euarchontoglires</taxon>
        <taxon>Glires</taxon>
        <taxon>Rodentia</taxon>
        <taxon>Myomorpha</taxon>
        <taxon>Muroidea</taxon>
        <taxon>Muridae</taxon>
        <taxon>Murinae</taxon>
        <taxon>Rattus</taxon>
    </lineage>
</organism>
<accession>D3ZWZ9</accession>
<protein>
    <recommendedName>
        <fullName>Protein GPR107</fullName>
    </recommendedName>
</protein>
<proteinExistence type="evidence at protein level"/>
<name>GP107_RAT</name>
<gene>
    <name type="primary">Gpr107</name>
</gene>